<accession>Q9HN70</accession>
<keyword id="KW-0067">ATP-binding</keyword>
<keyword id="KW-0143">Chaperone</keyword>
<keyword id="KW-0547">Nucleotide-binding</keyword>
<keyword id="KW-1185">Reference proteome</keyword>
<sequence length="562" mass="58669">MAQQMGNQPLIVLSEDSQRTSGEDAQSMNITAGKAVAESVRTTLGPKGMDKMLVDSSGEVVVTNDGVTILKEMDIEHPAANMIVEVAETQETEVGDGTTTSVVVSGELLSEAETLLEQDIHATTLAQGYRQAAEKAKELLDDAAIDVSADDTETLEKIAATAMTGKGAENAKGVLSDLVVRAVQSVADDNDVDTDNVKVEKVTGGAIENSELIEGVIVDKERVSENMPYAVEDANIALVDDGLEVQETEIDTEVNVTDPDQLQNFLDQEEEQLKEMVDALKDAGANVVFADSGIDDMAQHYLAKEGILAVRRAKSDDFTRLSRATGATPVSNVNDIEAADLGAAGSVAQKDIGGDERIFVEDVEEAKSVTLILRGGTEHVVDEVERAIEDSLGVVRVTLEDGQVMPGGGAPETELAMQLRDFADSVGGREQLAVEAFADALEVIPRTLAENAGHDPIDSLVDLRSQHDGGDTEAGLDAYNGDVIDMESEGIVEPLRVKTQAIESATEAATMILRIDDVIAAGDLAGGQVGDDDGDDGPAGGPGGMGGGMGGMGGMGGMGGAM</sequence>
<comment type="function">
    <text evidence="1">Molecular chaperone; binds unfolded polypeptides in vitro, and has a weak ATPase activity.</text>
</comment>
<comment type="subunit">
    <text evidence="1">Forms an oligomeric complex of eight-membered rings.</text>
</comment>
<comment type="similarity">
    <text evidence="3">Belongs to the TCP-1 chaperonin family.</text>
</comment>
<comment type="sequence caution" evidence="3">
    <conflict type="erroneous initiation">
        <sequence resource="EMBL-CDS" id="AAG20351"/>
    </conflict>
</comment>
<evidence type="ECO:0000250" key="1"/>
<evidence type="ECO:0000256" key="2">
    <source>
        <dbReference type="SAM" id="MobiDB-lite"/>
    </source>
</evidence>
<evidence type="ECO:0000305" key="3"/>
<dbReference type="EMBL" id="AE004437">
    <property type="protein sequence ID" value="AAG20351.1"/>
    <property type="status" value="ALT_INIT"/>
    <property type="molecule type" value="Genomic_DNA"/>
</dbReference>
<dbReference type="PIR" id="C84373">
    <property type="entry name" value="C84373"/>
</dbReference>
<dbReference type="SMR" id="Q9HN70"/>
<dbReference type="FunCoup" id="Q9HN70">
    <property type="interactions" value="185"/>
</dbReference>
<dbReference type="STRING" id="64091.VNG_2226G"/>
<dbReference type="PaxDb" id="64091-VNG_2226G"/>
<dbReference type="KEGG" id="hal:VNG_2226G"/>
<dbReference type="PATRIC" id="fig|64091.14.peg.1711"/>
<dbReference type="HOGENOM" id="CLU_008891_7_3_2"/>
<dbReference type="InParanoid" id="Q9HN70"/>
<dbReference type="PhylomeDB" id="Q9HN70"/>
<dbReference type="Proteomes" id="UP000000554">
    <property type="component" value="Chromosome"/>
</dbReference>
<dbReference type="GO" id="GO:0005524">
    <property type="term" value="F:ATP binding"/>
    <property type="evidence" value="ECO:0007669"/>
    <property type="project" value="UniProtKB-KW"/>
</dbReference>
<dbReference type="GO" id="GO:0016887">
    <property type="term" value="F:ATP hydrolysis activity"/>
    <property type="evidence" value="ECO:0007669"/>
    <property type="project" value="InterPro"/>
</dbReference>
<dbReference type="GO" id="GO:0140662">
    <property type="term" value="F:ATP-dependent protein folding chaperone"/>
    <property type="evidence" value="ECO:0007669"/>
    <property type="project" value="InterPro"/>
</dbReference>
<dbReference type="GO" id="GO:0051082">
    <property type="term" value="F:unfolded protein binding"/>
    <property type="evidence" value="ECO:0000318"/>
    <property type="project" value="GO_Central"/>
</dbReference>
<dbReference type="GO" id="GO:0006457">
    <property type="term" value="P:protein folding"/>
    <property type="evidence" value="ECO:0000318"/>
    <property type="project" value="GO_Central"/>
</dbReference>
<dbReference type="CDD" id="cd03343">
    <property type="entry name" value="cpn60"/>
    <property type="match status" value="1"/>
</dbReference>
<dbReference type="Gene3D" id="3.50.7.10">
    <property type="entry name" value="GroEL"/>
    <property type="match status" value="1"/>
</dbReference>
<dbReference type="Gene3D" id="1.10.560.10">
    <property type="entry name" value="GroEL-like equatorial domain"/>
    <property type="match status" value="1"/>
</dbReference>
<dbReference type="Gene3D" id="3.30.260.10">
    <property type="entry name" value="TCP-1-like chaperonin intermediate domain"/>
    <property type="match status" value="1"/>
</dbReference>
<dbReference type="InterPro" id="IPR017998">
    <property type="entry name" value="Chaperone_TCP-1"/>
</dbReference>
<dbReference type="InterPro" id="IPR002194">
    <property type="entry name" value="Chaperonin_TCP-1_CS"/>
</dbReference>
<dbReference type="InterPro" id="IPR002423">
    <property type="entry name" value="Cpn60/GroEL/TCP-1"/>
</dbReference>
<dbReference type="InterPro" id="IPR027409">
    <property type="entry name" value="GroEL-like_apical_dom_sf"/>
</dbReference>
<dbReference type="InterPro" id="IPR027413">
    <property type="entry name" value="GROEL-like_equatorial_sf"/>
</dbReference>
<dbReference type="InterPro" id="IPR027410">
    <property type="entry name" value="TCP-1-like_intermed_sf"/>
</dbReference>
<dbReference type="InterPro" id="IPR053374">
    <property type="entry name" value="TCP-1_chaperonin"/>
</dbReference>
<dbReference type="InterPro" id="IPR054827">
    <property type="entry name" value="thermosome_alpha"/>
</dbReference>
<dbReference type="InterPro" id="IPR012714">
    <property type="entry name" value="Thermosome_arc"/>
</dbReference>
<dbReference type="NCBIfam" id="NF041082">
    <property type="entry name" value="thermosome_alpha"/>
    <property type="match status" value="1"/>
</dbReference>
<dbReference type="NCBIfam" id="TIGR02339">
    <property type="entry name" value="thermosome_arch"/>
    <property type="match status" value="1"/>
</dbReference>
<dbReference type="NCBIfam" id="NF041083">
    <property type="entry name" value="thermosome_beta"/>
    <property type="match status" value="1"/>
</dbReference>
<dbReference type="PANTHER" id="PTHR11353">
    <property type="entry name" value="CHAPERONIN"/>
    <property type="match status" value="1"/>
</dbReference>
<dbReference type="Pfam" id="PF00118">
    <property type="entry name" value="Cpn60_TCP1"/>
    <property type="match status" value="1"/>
</dbReference>
<dbReference type="PRINTS" id="PR00304">
    <property type="entry name" value="TCOMPLEXTCP1"/>
</dbReference>
<dbReference type="SUPFAM" id="SSF52029">
    <property type="entry name" value="GroEL apical domain-like"/>
    <property type="match status" value="1"/>
</dbReference>
<dbReference type="SUPFAM" id="SSF48592">
    <property type="entry name" value="GroEL equatorial domain-like"/>
    <property type="match status" value="1"/>
</dbReference>
<dbReference type="SUPFAM" id="SSF54849">
    <property type="entry name" value="GroEL-intermediate domain like"/>
    <property type="match status" value="1"/>
</dbReference>
<dbReference type="PROSITE" id="PS00750">
    <property type="entry name" value="TCP1_1"/>
    <property type="match status" value="1"/>
</dbReference>
<dbReference type="PROSITE" id="PS00751">
    <property type="entry name" value="TCP1_2"/>
    <property type="match status" value="1"/>
</dbReference>
<dbReference type="PROSITE" id="PS00995">
    <property type="entry name" value="TCP1_3"/>
    <property type="match status" value="1"/>
</dbReference>
<feature type="chain" id="PRO_0000128385" description="Thermosome subunit alpha">
    <location>
        <begin position="1"/>
        <end position="562"/>
    </location>
</feature>
<feature type="region of interest" description="Disordered" evidence="2">
    <location>
        <begin position="1"/>
        <end position="23"/>
    </location>
</feature>
<feature type="region of interest" description="Disordered" evidence="2">
    <location>
        <begin position="526"/>
        <end position="551"/>
    </location>
</feature>
<feature type="compositionally biased region" description="Gly residues" evidence="2">
    <location>
        <begin position="537"/>
        <end position="551"/>
    </location>
</feature>
<organism>
    <name type="scientific">Halobacterium salinarum (strain ATCC 700922 / JCM 11081 / NRC-1)</name>
    <name type="common">Halobacterium halobium</name>
    <dbReference type="NCBI Taxonomy" id="64091"/>
    <lineage>
        <taxon>Archaea</taxon>
        <taxon>Methanobacteriati</taxon>
        <taxon>Methanobacteriota</taxon>
        <taxon>Stenosarchaea group</taxon>
        <taxon>Halobacteria</taxon>
        <taxon>Halobacteriales</taxon>
        <taxon>Halobacteriaceae</taxon>
        <taxon>Halobacterium</taxon>
        <taxon>Halobacterium salinarum NRC-34001</taxon>
    </lineage>
</organism>
<reference key="1">
    <citation type="journal article" date="2000" name="Proc. Natl. Acad. Sci. U.S.A.">
        <title>Genome sequence of Halobacterium species NRC-1.</title>
        <authorList>
            <person name="Ng W.V."/>
            <person name="Kennedy S.P."/>
            <person name="Mahairas G.G."/>
            <person name="Berquist B."/>
            <person name="Pan M."/>
            <person name="Shukla H.D."/>
            <person name="Lasky S.R."/>
            <person name="Baliga N.S."/>
            <person name="Thorsson V."/>
            <person name="Sbrogna J."/>
            <person name="Swartzell S."/>
            <person name="Weir D."/>
            <person name="Hall J."/>
            <person name="Dahl T.A."/>
            <person name="Welti R."/>
            <person name="Goo Y.A."/>
            <person name="Leithauser B."/>
            <person name="Keller K."/>
            <person name="Cruz R."/>
            <person name="Danson M.J."/>
            <person name="Hough D.W."/>
            <person name="Maddocks D.G."/>
            <person name="Jablonski P.E."/>
            <person name="Krebs M.P."/>
            <person name="Angevine C.M."/>
            <person name="Dale H."/>
            <person name="Isenbarger T.A."/>
            <person name="Peck R.F."/>
            <person name="Pohlschroder M."/>
            <person name="Spudich J.L."/>
            <person name="Jung K.-H."/>
            <person name="Alam M."/>
            <person name="Freitas T."/>
            <person name="Hou S."/>
            <person name="Daniels C.J."/>
            <person name="Dennis P.P."/>
            <person name="Omer A.D."/>
            <person name="Ebhardt H."/>
            <person name="Lowe T.M."/>
            <person name="Liang P."/>
            <person name="Riley M."/>
            <person name="Hood L."/>
            <person name="DasSarma S."/>
        </authorList>
    </citation>
    <scope>NUCLEOTIDE SEQUENCE [LARGE SCALE GENOMIC DNA]</scope>
    <source>
        <strain>ATCC 700922 / JCM 11081 / NRC-1</strain>
    </source>
</reference>
<gene>
    <name type="primary">thsA</name>
    <name type="synonym">cctA</name>
    <name type="ordered locus">VNG_2226G</name>
</gene>
<proteinExistence type="inferred from homology"/>
<name>THSA_HALSA</name>
<protein>
    <recommendedName>
        <fullName>Thermosome subunit alpha</fullName>
    </recommendedName>
    <alternativeName>
        <fullName>Chaperonin subunit alpha</fullName>
    </alternativeName>
    <alternativeName>
        <fullName>Thermosome subunit 1</fullName>
    </alternativeName>
</protein>